<gene>
    <name type="primary">SYP72</name>
    <name type="ordered locus">At3g45280</name>
    <name type="ORF">F18N11.40</name>
</gene>
<proteinExistence type="evidence at transcript level"/>
<accession>Q94KK6</accession>
<accession>Q9M3E9</accession>
<dbReference type="EMBL" id="AF355758">
    <property type="protein sequence ID" value="AAK40226.1"/>
    <property type="molecule type" value="mRNA"/>
</dbReference>
<dbReference type="EMBL" id="AL132953">
    <property type="protein sequence ID" value="CAB72477.1"/>
    <property type="status" value="ALT_SEQ"/>
    <property type="molecule type" value="Genomic_DNA"/>
</dbReference>
<dbReference type="EMBL" id="CP002686">
    <property type="protein sequence ID" value="AEE78017.1"/>
    <property type="molecule type" value="Genomic_DNA"/>
</dbReference>
<dbReference type="EMBL" id="CP002686">
    <property type="protein sequence ID" value="ANM64890.1"/>
    <property type="molecule type" value="Genomic_DNA"/>
</dbReference>
<dbReference type="RefSeq" id="NP_001319688.1">
    <property type="nucleotide sequence ID" value="NM_001339202.1"/>
</dbReference>
<dbReference type="RefSeq" id="NP_566878.1">
    <property type="nucleotide sequence ID" value="NM_114397.2"/>
</dbReference>
<dbReference type="SMR" id="Q94KK6"/>
<dbReference type="FunCoup" id="Q94KK6">
    <property type="interactions" value="73"/>
</dbReference>
<dbReference type="IntAct" id="Q94KK6">
    <property type="interactions" value="1"/>
</dbReference>
<dbReference type="STRING" id="3702.Q94KK6"/>
<dbReference type="PaxDb" id="3702-AT3G45280.1"/>
<dbReference type="ProteomicsDB" id="233053"/>
<dbReference type="EnsemblPlants" id="AT3G45280.1">
    <property type="protein sequence ID" value="AT3G45280.1"/>
    <property type="gene ID" value="AT3G45280"/>
</dbReference>
<dbReference type="EnsemblPlants" id="AT3G45280.3">
    <property type="protein sequence ID" value="AT3G45280.3"/>
    <property type="gene ID" value="AT3G45280"/>
</dbReference>
<dbReference type="GeneID" id="823666"/>
<dbReference type="Gramene" id="AT3G45280.1">
    <property type="protein sequence ID" value="AT3G45280.1"/>
    <property type="gene ID" value="AT3G45280"/>
</dbReference>
<dbReference type="Gramene" id="AT3G45280.3">
    <property type="protein sequence ID" value="AT3G45280.3"/>
    <property type="gene ID" value="AT3G45280"/>
</dbReference>
<dbReference type="KEGG" id="ath:AT3G45280"/>
<dbReference type="Araport" id="AT3G45280"/>
<dbReference type="TAIR" id="AT3G45280">
    <property type="gene designation" value="SYP72"/>
</dbReference>
<dbReference type="eggNOG" id="ENOG502QS7N">
    <property type="taxonomic scope" value="Eukaryota"/>
</dbReference>
<dbReference type="HOGENOM" id="CLU_091888_0_0_1"/>
<dbReference type="InParanoid" id="Q94KK6"/>
<dbReference type="OMA" id="KYDADKH"/>
<dbReference type="PhylomeDB" id="Q94KK6"/>
<dbReference type="PRO" id="PR:Q94KK6"/>
<dbReference type="Proteomes" id="UP000006548">
    <property type="component" value="Chromosome 3"/>
</dbReference>
<dbReference type="ExpressionAtlas" id="Q94KK6">
    <property type="expression patterns" value="baseline and differential"/>
</dbReference>
<dbReference type="GO" id="GO:0016020">
    <property type="term" value="C:membrane"/>
    <property type="evidence" value="ECO:0007669"/>
    <property type="project" value="UniProtKB-SubCell"/>
</dbReference>
<dbReference type="GO" id="GO:0005484">
    <property type="term" value="F:SNAP receptor activity"/>
    <property type="evidence" value="ECO:0007669"/>
    <property type="project" value="InterPro"/>
</dbReference>
<dbReference type="GO" id="GO:0006886">
    <property type="term" value="P:intracellular protein transport"/>
    <property type="evidence" value="ECO:0000304"/>
    <property type="project" value="TAIR"/>
</dbReference>
<dbReference type="CDD" id="cd15841">
    <property type="entry name" value="SNARE_Qc"/>
    <property type="match status" value="1"/>
</dbReference>
<dbReference type="FunFam" id="1.20.5.110:FF:000037">
    <property type="entry name" value="Putative syntaxin-71-like"/>
    <property type="match status" value="1"/>
</dbReference>
<dbReference type="Gene3D" id="1.20.5.110">
    <property type="match status" value="1"/>
</dbReference>
<dbReference type="InterPro" id="IPR045242">
    <property type="entry name" value="Syntaxin"/>
</dbReference>
<dbReference type="InterPro" id="IPR006012">
    <property type="entry name" value="Syntaxin/epimorphin_CS"/>
</dbReference>
<dbReference type="InterPro" id="IPR000727">
    <property type="entry name" value="T_SNARE_dom"/>
</dbReference>
<dbReference type="PANTHER" id="PTHR19957">
    <property type="entry name" value="SYNTAXIN"/>
    <property type="match status" value="1"/>
</dbReference>
<dbReference type="PANTHER" id="PTHR19957:SF263">
    <property type="entry name" value="SYNTAXIN-72"/>
    <property type="match status" value="1"/>
</dbReference>
<dbReference type="Pfam" id="PF05739">
    <property type="entry name" value="SNARE"/>
    <property type="match status" value="1"/>
</dbReference>
<dbReference type="SMART" id="SM00397">
    <property type="entry name" value="t_SNARE"/>
    <property type="match status" value="1"/>
</dbReference>
<dbReference type="SUPFAM" id="SSF58038">
    <property type="entry name" value="SNARE fusion complex"/>
    <property type="match status" value="1"/>
</dbReference>
<dbReference type="PROSITE" id="PS00914">
    <property type="entry name" value="SYNTAXIN"/>
    <property type="match status" value="1"/>
</dbReference>
<dbReference type="PROSITE" id="PS50192">
    <property type="entry name" value="T_SNARE"/>
    <property type="match status" value="1"/>
</dbReference>
<organism>
    <name type="scientific">Arabidopsis thaliana</name>
    <name type="common">Mouse-ear cress</name>
    <dbReference type="NCBI Taxonomy" id="3702"/>
    <lineage>
        <taxon>Eukaryota</taxon>
        <taxon>Viridiplantae</taxon>
        <taxon>Streptophyta</taxon>
        <taxon>Embryophyta</taxon>
        <taxon>Tracheophyta</taxon>
        <taxon>Spermatophyta</taxon>
        <taxon>Magnoliopsida</taxon>
        <taxon>eudicotyledons</taxon>
        <taxon>Gunneridae</taxon>
        <taxon>Pentapetalae</taxon>
        <taxon>rosids</taxon>
        <taxon>malvids</taxon>
        <taxon>Brassicales</taxon>
        <taxon>Brassicaceae</taxon>
        <taxon>Camelineae</taxon>
        <taxon>Arabidopsis</taxon>
    </lineage>
</organism>
<comment type="function">
    <text evidence="1">Vesicle trafficking protein that functions in the secretory pathway.</text>
</comment>
<comment type="subunit">
    <text evidence="1">Part of the t-SNARE complex.</text>
</comment>
<comment type="subcellular location">
    <subcellularLocation>
        <location evidence="1">Membrane</location>
        <topology evidence="1">Single-pass type IV membrane protein</topology>
    </subcellularLocation>
</comment>
<comment type="tissue specificity">
    <text>Expressed in root, leaf, stem, flower and silique.</text>
</comment>
<comment type="similarity">
    <text evidence="4">Belongs to the syntaxin family.</text>
</comment>
<comment type="sequence caution" evidence="4">
    <conflict type="erroneous gene model prediction">
        <sequence resource="EMBL-CDS" id="CAB72477"/>
    </conflict>
</comment>
<keyword id="KW-0175">Coiled coil</keyword>
<keyword id="KW-0472">Membrane</keyword>
<keyword id="KW-0653">Protein transport</keyword>
<keyword id="KW-1185">Reference proteome</keyword>
<keyword id="KW-0812">Transmembrane</keyword>
<keyword id="KW-1133">Transmembrane helix</keyword>
<keyword id="KW-0813">Transport</keyword>
<evidence type="ECO:0000250" key="1"/>
<evidence type="ECO:0000255" key="2"/>
<evidence type="ECO:0000255" key="3">
    <source>
        <dbReference type="PROSITE-ProRule" id="PRU00202"/>
    </source>
</evidence>
<evidence type="ECO:0000305" key="4"/>
<sequence length="267" mass="30284">MPVIDIIFRVDEICKKYDKYDIDKHREIGASGDDAFSRLFTSIDSDIEAVLRKAELASTEKNRAAAVAMNAEVRRTKARLAEDVVKLQKLAVKKIKGLTREERESRCDLVIALADRLQAIPDGNEHGAKQANSDWGGASAPNKNIKFDMSEEDMDDGFFQQSEESSQFRQEYEMRRKKQDEGLDIISEGLDALKNLARDMNEELDKQVPLMEEMETKVDGATSDLKNTNVRLKKQLVQMRSSRNFCIDIILLCVILGIVSYIYNALN</sequence>
<reference key="1">
    <citation type="journal article" date="2001" name="Mol. Biol. Cell">
        <title>Interactions between syntaxins identify at least five SNARE complexes within the Golgi/prevacuolar system of the Arabidopsis cell.</title>
        <authorList>
            <person name="Sanderfoot A.A."/>
            <person name="Kovaleva V."/>
            <person name="Bassham D.C."/>
            <person name="Raikhel N.V."/>
        </authorList>
    </citation>
    <scope>NUCLEOTIDE SEQUENCE [MRNA]</scope>
</reference>
<reference key="2">
    <citation type="journal article" date="2000" name="Nature">
        <title>Sequence and analysis of chromosome 3 of the plant Arabidopsis thaliana.</title>
        <authorList>
            <person name="Salanoubat M."/>
            <person name="Lemcke K."/>
            <person name="Rieger M."/>
            <person name="Ansorge W."/>
            <person name="Unseld M."/>
            <person name="Fartmann B."/>
            <person name="Valle G."/>
            <person name="Bloecker H."/>
            <person name="Perez-Alonso M."/>
            <person name="Obermaier B."/>
            <person name="Delseny M."/>
            <person name="Boutry M."/>
            <person name="Grivell L.A."/>
            <person name="Mache R."/>
            <person name="Puigdomenech P."/>
            <person name="De Simone V."/>
            <person name="Choisne N."/>
            <person name="Artiguenave F."/>
            <person name="Robert C."/>
            <person name="Brottier P."/>
            <person name="Wincker P."/>
            <person name="Cattolico L."/>
            <person name="Weissenbach J."/>
            <person name="Saurin W."/>
            <person name="Quetier F."/>
            <person name="Schaefer M."/>
            <person name="Mueller-Auer S."/>
            <person name="Gabel C."/>
            <person name="Fuchs M."/>
            <person name="Benes V."/>
            <person name="Wurmbach E."/>
            <person name="Drzonek H."/>
            <person name="Erfle H."/>
            <person name="Jordan N."/>
            <person name="Bangert S."/>
            <person name="Wiedelmann R."/>
            <person name="Kranz H."/>
            <person name="Voss H."/>
            <person name="Holland R."/>
            <person name="Brandt P."/>
            <person name="Nyakatura G."/>
            <person name="Vezzi A."/>
            <person name="D'Angelo M."/>
            <person name="Pallavicini A."/>
            <person name="Toppo S."/>
            <person name="Simionati B."/>
            <person name="Conrad A."/>
            <person name="Hornischer K."/>
            <person name="Kauer G."/>
            <person name="Loehnert T.-H."/>
            <person name="Nordsiek G."/>
            <person name="Reichelt J."/>
            <person name="Scharfe M."/>
            <person name="Schoen O."/>
            <person name="Bargues M."/>
            <person name="Terol J."/>
            <person name="Climent J."/>
            <person name="Navarro P."/>
            <person name="Collado C."/>
            <person name="Perez-Perez A."/>
            <person name="Ottenwaelder B."/>
            <person name="Duchemin D."/>
            <person name="Cooke R."/>
            <person name="Laudie M."/>
            <person name="Berger-Llauro C."/>
            <person name="Purnelle B."/>
            <person name="Masuy D."/>
            <person name="de Haan M."/>
            <person name="Maarse A.C."/>
            <person name="Alcaraz J.-P."/>
            <person name="Cottet A."/>
            <person name="Casacuberta E."/>
            <person name="Monfort A."/>
            <person name="Argiriou A."/>
            <person name="Flores M."/>
            <person name="Liguori R."/>
            <person name="Vitale D."/>
            <person name="Mannhaupt G."/>
            <person name="Haase D."/>
            <person name="Schoof H."/>
            <person name="Rudd S."/>
            <person name="Zaccaria P."/>
            <person name="Mewes H.-W."/>
            <person name="Mayer K.F.X."/>
            <person name="Kaul S."/>
            <person name="Town C.D."/>
            <person name="Koo H.L."/>
            <person name="Tallon L.J."/>
            <person name="Jenkins J."/>
            <person name="Rooney T."/>
            <person name="Rizzo M."/>
            <person name="Walts A."/>
            <person name="Utterback T."/>
            <person name="Fujii C.Y."/>
            <person name="Shea T.P."/>
            <person name="Creasy T.H."/>
            <person name="Haas B."/>
            <person name="Maiti R."/>
            <person name="Wu D."/>
            <person name="Peterson J."/>
            <person name="Van Aken S."/>
            <person name="Pai G."/>
            <person name="Militscher J."/>
            <person name="Sellers P."/>
            <person name="Gill J.E."/>
            <person name="Feldblyum T.V."/>
            <person name="Preuss D."/>
            <person name="Lin X."/>
            <person name="Nierman W.C."/>
            <person name="Salzberg S.L."/>
            <person name="White O."/>
            <person name="Venter J.C."/>
            <person name="Fraser C.M."/>
            <person name="Kaneko T."/>
            <person name="Nakamura Y."/>
            <person name="Sato S."/>
            <person name="Kato T."/>
            <person name="Asamizu E."/>
            <person name="Sasamoto S."/>
            <person name="Kimura T."/>
            <person name="Idesawa K."/>
            <person name="Kawashima K."/>
            <person name="Kishida Y."/>
            <person name="Kiyokawa C."/>
            <person name="Kohara M."/>
            <person name="Matsumoto M."/>
            <person name="Matsuno A."/>
            <person name="Muraki A."/>
            <person name="Nakayama S."/>
            <person name="Nakazaki N."/>
            <person name="Shinpo S."/>
            <person name="Takeuchi C."/>
            <person name="Wada T."/>
            <person name="Watanabe A."/>
            <person name="Yamada M."/>
            <person name="Yasuda M."/>
            <person name="Tabata S."/>
        </authorList>
    </citation>
    <scope>NUCLEOTIDE SEQUENCE [LARGE SCALE GENOMIC DNA]</scope>
    <source>
        <strain>cv. Columbia</strain>
    </source>
</reference>
<reference key="3">
    <citation type="journal article" date="2017" name="Plant J.">
        <title>Araport11: a complete reannotation of the Arabidopsis thaliana reference genome.</title>
        <authorList>
            <person name="Cheng C.Y."/>
            <person name="Krishnakumar V."/>
            <person name="Chan A.P."/>
            <person name="Thibaud-Nissen F."/>
            <person name="Schobel S."/>
            <person name="Town C.D."/>
        </authorList>
    </citation>
    <scope>GENOME REANNOTATION</scope>
    <source>
        <strain>cv. Columbia</strain>
    </source>
</reference>
<protein>
    <recommendedName>
        <fullName>Syntaxin-72</fullName>
        <shortName>AtSYP72</shortName>
    </recommendedName>
</protein>
<feature type="chain" id="PRO_0000210265" description="Syntaxin-72">
    <location>
        <begin position="1"/>
        <end position="267"/>
    </location>
</feature>
<feature type="topological domain" description="Cytoplasmic" evidence="2">
    <location>
        <begin position="1"/>
        <end position="244"/>
    </location>
</feature>
<feature type="transmembrane region" description="Helical; Anchor for type IV membrane protein" evidence="2">
    <location>
        <begin position="245"/>
        <end position="265"/>
    </location>
</feature>
<feature type="topological domain" description="Vesicular" evidence="2">
    <location>
        <begin position="266"/>
        <end position="267"/>
    </location>
</feature>
<feature type="domain" description="t-SNARE coiled-coil homology" evidence="3">
    <location>
        <begin position="173"/>
        <end position="235"/>
    </location>
</feature>
<feature type="coiled-coil region" evidence="2">
    <location>
        <begin position="53"/>
        <end position="87"/>
    </location>
</feature>
<name>SYP72_ARATH</name>